<sequence>MKLSVLTFVVDALLVCSSIVDAGVTDFPSLPSNEVYVKMNFQKKYGSSFENALDDTKGRTRLMTRDDDYELVELTNQNSFYSVELDIGTPPQKVTVLVDTGSSDLWVTGSDNPYCSTKKKDTTGSSFKQVNKDALASVVESVFTEISYDTTIVTSEATATFDSTASTSQLIDCATYGTFNTSKSSTFNSNNTEFSIAYGDTTFASGTWGHDQLSLNDLNITGLSFAVANETNSTVGVLGIGLPGLESTYSGVSLSSVQKSYTYNNFPMVLKNSGVIKSTAYSLFANDSDSKHGTILFGAVDHGKYAGDLYTIPIINTLQHRGYKDPIQFQVTLQGLGTSKGDKEDNLTTLTTTKIPVLLDSGTTISYMPTELVKMLADQVGATYSSAYGYYIMDCIKEMEEESSIIFDFGGFYLSNWLSDFQLVTDSRSNICILGIAPQSDPTIILGDNFLANTYVVYDLDNMEISMAQANFSDDGEYIEIIESAVPSALKAPGYSSTWSTYESIVSGGNMFSTAANSSISYFASTSHSATSSSSSKGQKTQTSTTALSISKSTSSTSSTGMLSPTSSSSTRKENGGHNLNPPFFARFITAIFHHI</sequence>
<feature type="signal peptide" evidence="1">
    <location>
        <begin position="1"/>
        <end position="22"/>
    </location>
</feature>
<feature type="propeptide" id="PRO_0000025835" evidence="1">
    <location>
        <begin position="23"/>
        <end position="65"/>
    </location>
</feature>
<feature type="chain" id="PRO_0000025836" description="Aspartic proteinase MKC7">
    <location>
        <begin position="66"/>
        <end position="575"/>
    </location>
</feature>
<feature type="propeptide" id="PRO_0000025837" description="Removed in mature form" evidence="1">
    <location>
        <begin position="576"/>
        <end position="596"/>
    </location>
</feature>
<feature type="domain" description="Peptidase A1" evidence="2">
    <location>
        <begin position="81"/>
        <end position="468"/>
    </location>
</feature>
<feature type="region of interest" description="Disordered" evidence="4">
    <location>
        <begin position="530"/>
        <end position="578"/>
    </location>
</feature>
<feature type="compositionally biased region" description="Low complexity" evidence="4">
    <location>
        <begin position="530"/>
        <end position="570"/>
    </location>
</feature>
<feature type="active site" evidence="3">
    <location>
        <position position="99"/>
    </location>
</feature>
<feature type="active site" evidence="3">
    <location>
        <position position="360"/>
    </location>
</feature>
<feature type="lipid moiety-binding region" description="GPI-anchor amidated asparagine" evidence="1">
    <location>
        <position position="575"/>
    </location>
</feature>
<feature type="glycosylation site" description="N-linked (GlcNAc...) asparagine" evidence="1">
    <location>
        <position position="180"/>
    </location>
</feature>
<feature type="glycosylation site" description="N-linked (GlcNAc...) asparagine" evidence="1">
    <location>
        <position position="190"/>
    </location>
</feature>
<feature type="glycosylation site" description="N-linked (GlcNAc...) asparagine" evidence="1">
    <location>
        <position position="219"/>
    </location>
</feature>
<feature type="glycosylation site" description="N-linked (GlcNAc...) asparagine" evidence="1">
    <location>
        <position position="229"/>
    </location>
</feature>
<feature type="glycosylation site" description="N-linked (GlcNAc...) asparagine" evidence="1">
    <location>
        <position position="232"/>
    </location>
</feature>
<feature type="glycosylation site" description="N-linked (GlcNAc...) asparagine" evidence="1">
    <location>
        <position position="286"/>
    </location>
</feature>
<feature type="glycosylation site" description="N-linked (GlcNAc...) asparagine" evidence="1">
    <location>
        <position position="346"/>
    </location>
</feature>
<feature type="glycosylation site" description="N-linked (GlcNAc...) asparagine" evidence="1">
    <location>
        <position position="471"/>
    </location>
</feature>
<feature type="glycosylation site" description="N-linked (GlcNAc...) asparagine" evidence="1">
    <location>
        <position position="517"/>
    </location>
</feature>
<feature type="sequence conflict" description="In Ref. 1; AAC49112." evidence="9" ref="1">
    <original>T</original>
    <variation>A</variation>
    <location>
        <position position="546"/>
    </location>
</feature>
<feature type="sequence conflict" description="In Ref. 1; AAC49112." evidence="9" ref="1">
    <original>T</original>
    <variation>P</variation>
    <location>
        <position position="571"/>
    </location>
</feature>
<keyword id="KW-0064">Aspartyl protease</keyword>
<keyword id="KW-1003">Cell membrane</keyword>
<keyword id="KW-0903">Direct protein sequencing</keyword>
<keyword id="KW-0325">Glycoprotein</keyword>
<keyword id="KW-0336">GPI-anchor</keyword>
<keyword id="KW-0378">Hydrolase</keyword>
<keyword id="KW-0449">Lipoprotein</keyword>
<keyword id="KW-0472">Membrane</keyword>
<keyword id="KW-0645">Protease</keyword>
<keyword id="KW-1185">Reference proteome</keyword>
<keyword id="KW-0732">Signal</keyword>
<keyword id="KW-0865">Zymogen</keyword>
<organism>
    <name type="scientific">Saccharomyces cerevisiae (strain ATCC 204508 / S288c)</name>
    <name type="common">Baker's yeast</name>
    <dbReference type="NCBI Taxonomy" id="559292"/>
    <lineage>
        <taxon>Eukaryota</taxon>
        <taxon>Fungi</taxon>
        <taxon>Dikarya</taxon>
        <taxon>Ascomycota</taxon>
        <taxon>Saccharomycotina</taxon>
        <taxon>Saccharomycetes</taxon>
        <taxon>Saccharomycetales</taxon>
        <taxon>Saccharomycetaceae</taxon>
        <taxon>Saccharomyces</taxon>
    </lineage>
</organism>
<dbReference type="EC" id="3.4.23.41"/>
<dbReference type="EMBL" id="U14733">
    <property type="protein sequence ID" value="AAC49112.1"/>
    <property type="molecule type" value="Genomic_DNA"/>
</dbReference>
<dbReference type="EMBL" id="Z50046">
    <property type="protein sequence ID" value="CAA90367.1"/>
    <property type="molecule type" value="Genomic_DNA"/>
</dbReference>
<dbReference type="EMBL" id="Z54139">
    <property type="protein sequence ID" value="CAA90813.1"/>
    <property type="molecule type" value="Genomic_DNA"/>
</dbReference>
<dbReference type="EMBL" id="BK006938">
    <property type="protein sequence ID" value="DAA11987.1"/>
    <property type="molecule type" value="Genomic_DNA"/>
</dbReference>
<dbReference type="PIR" id="S57971">
    <property type="entry name" value="S57971"/>
</dbReference>
<dbReference type="RefSeq" id="NP_010428.3">
    <property type="nucleotide sequence ID" value="NM_001180451.3"/>
</dbReference>
<dbReference type="SMR" id="P53379"/>
<dbReference type="BioGRID" id="32198">
    <property type="interactions" value="124"/>
</dbReference>
<dbReference type="DIP" id="DIP-4585N"/>
<dbReference type="FunCoup" id="P53379">
    <property type="interactions" value="198"/>
</dbReference>
<dbReference type="IntAct" id="P53379">
    <property type="interactions" value="16"/>
</dbReference>
<dbReference type="MINT" id="P53379"/>
<dbReference type="STRING" id="4932.YDR144C"/>
<dbReference type="MEROPS" id="A01.031"/>
<dbReference type="GlyCosmos" id="P53379">
    <property type="glycosylation" value="9 sites, No reported glycans"/>
</dbReference>
<dbReference type="GlyGen" id="P53379">
    <property type="glycosylation" value="9 sites"/>
</dbReference>
<dbReference type="iPTMnet" id="P53379"/>
<dbReference type="PaxDb" id="4932-YDR144C"/>
<dbReference type="PeptideAtlas" id="P53379"/>
<dbReference type="EnsemblFungi" id="YDR144C_mRNA">
    <property type="protein sequence ID" value="YDR144C"/>
    <property type="gene ID" value="YDR144C"/>
</dbReference>
<dbReference type="GeneID" id="851722"/>
<dbReference type="KEGG" id="sce:YDR144C"/>
<dbReference type="AGR" id="SGD:S000002551"/>
<dbReference type="SGD" id="S000002551">
    <property type="gene designation" value="MKC7"/>
</dbReference>
<dbReference type="VEuPathDB" id="FungiDB:YDR144C"/>
<dbReference type="eggNOG" id="KOG1339">
    <property type="taxonomic scope" value="Eukaryota"/>
</dbReference>
<dbReference type="GeneTree" id="ENSGT00940000166661"/>
<dbReference type="HOGENOM" id="CLU_013253_9_1_1"/>
<dbReference type="InParanoid" id="P53379"/>
<dbReference type="OMA" id="IWGYDDV"/>
<dbReference type="OrthoDB" id="771136at2759"/>
<dbReference type="BioCyc" id="YEAST:G3O-29741-MONOMER"/>
<dbReference type="BioGRID-ORCS" id="851722">
    <property type="hits" value="0 hits in 10 CRISPR screens"/>
</dbReference>
<dbReference type="PRO" id="PR:P53379"/>
<dbReference type="Proteomes" id="UP000002311">
    <property type="component" value="Chromosome IV"/>
</dbReference>
<dbReference type="RNAct" id="P53379">
    <property type="molecule type" value="protein"/>
</dbReference>
<dbReference type="GO" id="GO:0005576">
    <property type="term" value="C:extracellular region"/>
    <property type="evidence" value="ECO:0000318"/>
    <property type="project" value="GO_Central"/>
</dbReference>
<dbReference type="GO" id="GO:0009277">
    <property type="term" value="C:fungal-type cell wall"/>
    <property type="evidence" value="ECO:0000314"/>
    <property type="project" value="SGD"/>
</dbReference>
<dbReference type="GO" id="GO:0000324">
    <property type="term" value="C:fungal-type vacuole"/>
    <property type="evidence" value="ECO:0007005"/>
    <property type="project" value="SGD"/>
</dbReference>
<dbReference type="GO" id="GO:0005886">
    <property type="term" value="C:plasma membrane"/>
    <property type="evidence" value="ECO:0007669"/>
    <property type="project" value="UniProtKB-SubCell"/>
</dbReference>
<dbReference type="GO" id="GO:0098552">
    <property type="term" value="C:side of membrane"/>
    <property type="evidence" value="ECO:0007669"/>
    <property type="project" value="UniProtKB-KW"/>
</dbReference>
<dbReference type="GO" id="GO:0004190">
    <property type="term" value="F:aspartic-type endopeptidase activity"/>
    <property type="evidence" value="ECO:0000314"/>
    <property type="project" value="SGD"/>
</dbReference>
<dbReference type="GO" id="GO:0031505">
    <property type="term" value="P:fungal-type cell wall organization"/>
    <property type="evidence" value="ECO:0000316"/>
    <property type="project" value="SGD"/>
</dbReference>
<dbReference type="GO" id="GO:0006508">
    <property type="term" value="P:proteolysis"/>
    <property type="evidence" value="ECO:0007669"/>
    <property type="project" value="UniProtKB-KW"/>
</dbReference>
<dbReference type="GO" id="GO:0001402">
    <property type="term" value="P:signal transduction involved in filamentous growth"/>
    <property type="evidence" value="ECO:0000315"/>
    <property type="project" value="SGD"/>
</dbReference>
<dbReference type="CDD" id="cd05474">
    <property type="entry name" value="SAP_like"/>
    <property type="match status" value="1"/>
</dbReference>
<dbReference type="FunFam" id="2.40.70.10:FF:000023">
    <property type="entry name" value="Aspartic protease"/>
    <property type="match status" value="1"/>
</dbReference>
<dbReference type="Gene3D" id="2.40.70.10">
    <property type="entry name" value="Acid Proteases"/>
    <property type="match status" value="2"/>
</dbReference>
<dbReference type="InterPro" id="IPR001461">
    <property type="entry name" value="Aspartic_peptidase_A1"/>
</dbReference>
<dbReference type="InterPro" id="IPR001969">
    <property type="entry name" value="Aspartic_peptidase_AS"/>
</dbReference>
<dbReference type="InterPro" id="IPR033121">
    <property type="entry name" value="PEPTIDASE_A1"/>
</dbReference>
<dbReference type="InterPro" id="IPR021109">
    <property type="entry name" value="Peptidase_aspartic_dom_sf"/>
</dbReference>
<dbReference type="InterPro" id="IPR033876">
    <property type="entry name" value="SAP-like"/>
</dbReference>
<dbReference type="PANTHER" id="PTHR47966:SF65">
    <property type="entry name" value="ASPARTIC-TYPE ENDOPEPTIDASE"/>
    <property type="match status" value="1"/>
</dbReference>
<dbReference type="PANTHER" id="PTHR47966">
    <property type="entry name" value="BETA-SITE APP-CLEAVING ENZYME, ISOFORM A-RELATED"/>
    <property type="match status" value="1"/>
</dbReference>
<dbReference type="Pfam" id="PF00026">
    <property type="entry name" value="Asp"/>
    <property type="match status" value="1"/>
</dbReference>
<dbReference type="PRINTS" id="PR00792">
    <property type="entry name" value="PEPSIN"/>
</dbReference>
<dbReference type="SUPFAM" id="SSF50630">
    <property type="entry name" value="Acid proteases"/>
    <property type="match status" value="1"/>
</dbReference>
<dbReference type="PROSITE" id="PS00141">
    <property type="entry name" value="ASP_PROTEASE"/>
    <property type="match status" value="2"/>
</dbReference>
<dbReference type="PROSITE" id="PS51767">
    <property type="entry name" value="PEPTIDASE_A1"/>
    <property type="match status" value="1"/>
</dbReference>
<comment type="function">
    <text evidence="5 7 8">Cleaves proteins C-terminally to the most C-terminal basic residue. Can process the alpha-mating factor precursor. Required for cell wall integrity.</text>
</comment>
<comment type="catalytic activity">
    <reaction>
        <text>Hydrolyzes various precursor proteins with Arg or Lys in P1, and commonly Arg or Lys also in P2. The P3 amino acid is usually non-polar, but otherwise additional basic amino acids are favorable in both non-prime and prime positions.</text>
        <dbReference type="EC" id="3.4.23.41"/>
    </reaction>
</comment>
<comment type="biophysicochemical properties">
    <phDependence>
        <text evidence="5">Optimum pH is 4-7. Optimum pH is substrate-dependent.</text>
    </phDependence>
</comment>
<comment type="subcellular location">
    <subcellularLocation>
        <location evidence="5 8">Cell membrane</location>
        <topology evidence="5 8">Lipid-anchor</topology>
        <topology evidence="5 8">GPI-anchor</topology>
    </subcellularLocation>
    <text>GPI-anchored plasma membrane protein (GPI-PMP).</text>
</comment>
<comment type="miscellaneous">
    <text evidence="6">Present with 538 molecules/cell in log phase SD medium.</text>
</comment>
<comment type="similarity">
    <text evidence="9">Belongs to the peptidase A1 family.</text>
</comment>
<evidence type="ECO:0000255" key="1"/>
<evidence type="ECO:0000255" key="2">
    <source>
        <dbReference type="PROSITE-ProRule" id="PRU01103"/>
    </source>
</evidence>
<evidence type="ECO:0000255" key="3">
    <source>
        <dbReference type="PROSITE-ProRule" id="PRU10094"/>
    </source>
</evidence>
<evidence type="ECO:0000256" key="4">
    <source>
        <dbReference type="SAM" id="MobiDB-lite"/>
    </source>
</evidence>
<evidence type="ECO:0000269" key="5">
    <source>
    </source>
</evidence>
<evidence type="ECO:0000269" key="6">
    <source>
    </source>
</evidence>
<evidence type="ECO:0000269" key="7">
    <source>
    </source>
</evidence>
<evidence type="ECO:0000269" key="8">
    <source>
    </source>
</evidence>
<evidence type="ECO:0000305" key="9"/>
<proteinExistence type="evidence at protein level"/>
<name>MKC7_YEAST</name>
<reference key="1">
    <citation type="journal article" date="1995" name="Proc. Natl. Acad. Sci. U.S.A.">
        <title>Shared functions in vivo of a glycosyl-phosphatidylinositol-linked aspartyl protease, Mkc7, and the proprotein processing protease Kex2 in yeast.</title>
        <authorList>
            <person name="Komano H."/>
            <person name="Fuller R.S."/>
        </authorList>
    </citation>
    <scope>NUCLEOTIDE SEQUENCE [GENOMIC DNA]</scope>
    <scope>FUNCTION</scope>
    <scope>SUBCELLULAR LOCATION</scope>
</reference>
<reference key="2">
    <citation type="journal article" date="1997" name="Nature">
        <title>The nucleotide sequence of Saccharomyces cerevisiae chromosome IV.</title>
        <authorList>
            <person name="Jacq C."/>
            <person name="Alt-Moerbe J."/>
            <person name="Andre B."/>
            <person name="Arnold W."/>
            <person name="Bahr A."/>
            <person name="Ballesta J.P.G."/>
            <person name="Bargues M."/>
            <person name="Baron L."/>
            <person name="Becker A."/>
            <person name="Biteau N."/>
            <person name="Bloecker H."/>
            <person name="Blugeon C."/>
            <person name="Boskovic J."/>
            <person name="Brandt P."/>
            <person name="Brueckner M."/>
            <person name="Buitrago M.J."/>
            <person name="Coster F."/>
            <person name="Delaveau T."/>
            <person name="del Rey F."/>
            <person name="Dujon B."/>
            <person name="Eide L.G."/>
            <person name="Garcia-Cantalejo J.M."/>
            <person name="Goffeau A."/>
            <person name="Gomez-Peris A."/>
            <person name="Granotier C."/>
            <person name="Hanemann V."/>
            <person name="Hankeln T."/>
            <person name="Hoheisel J.D."/>
            <person name="Jaeger W."/>
            <person name="Jimenez A."/>
            <person name="Jonniaux J.-L."/>
            <person name="Kraemer C."/>
            <person name="Kuester H."/>
            <person name="Laamanen P."/>
            <person name="Legros Y."/>
            <person name="Louis E.J."/>
            <person name="Moeller-Rieker S."/>
            <person name="Monnet A."/>
            <person name="Moro M."/>
            <person name="Mueller-Auer S."/>
            <person name="Nussbaumer B."/>
            <person name="Paricio N."/>
            <person name="Paulin L."/>
            <person name="Perea J."/>
            <person name="Perez-Alonso M."/>
            <person name="Perez-Ortin J.E."/>
            <person name="Pohl T.M."/>
            <person name="Prydz H."/>
            <person name="Purnelle B."/>
            <person name="Rasmussen S.W."/>
            <person name="Remacha M.A."/>
            <person name="Revuelta J.L."/>
            <person name="Rieger M."/>
            <person name="Salom D."/>
            <person name="Saluz H.P."/>
            <person name="Saiz J.E."/>
            <person name="Saren A.-M."/>
            <person name="Schaefer M."/>
            <person name="Scharfe M."/>
            <person name="Schmidt E.R."/>
            <person name="Schneider C."/>
            <person name="Scholler P."/>
            <person name="Schwarz S."/>
            <person name="Soler-Mira A."/>
            <person name="Urrestarazu L.A."/>
            <person name="Verhasselt P."/>
            <person name="Vissers S."/>
            <person name="Voet M."/>
            <person name="Volckaert G."/>
            <person name="Wagner G."/>
            <person name="Wambutt R."/>
            <person name="Wedler E."/>
            <person name="Wedler H."/>
            <person name="Woelfl S."/>
            <person name="Harris D.E."/>
            <person name="Bowman S."/>
            <person name="Brown D."/>
            <person name="Churcher C.M."/>
            <person name="Connor R."/>
            <person name="Dedman K."/>
            <person name="Gentles S."/>
            <person name="Hamlin N."/>
            <person name="Hunt S."/>
            <person name="Jones L."/>
            <person name="McDonald S."/>
            <person name="Murphy L.D."/>
            <person name="Niblett D."/>
            <person name="Odell C."/>
            <person name="Oliver K."/>
            <person name="Rajandream M.A."/>
            <person name="Richards C."/>
            <person name="Shore L."/>
            <person name="Walsh S.V."/>
            <person name="Barrell B.G."/>
            <person name="Dietrich F.S."/>
            <person name="Mulligan J.T."/>
            <person name="Allen E."/>
            <person name="Araujo R."/>
            <person name="Aviles E."/>
            <person name="Berno A."/>
            <person name="Carpenter J."/>
            <person name="Chen E."/>
            <person name="Cherry J.M."/>
            <person name="Chung E."/>
            <person name="Duncan M."/>
            <person name="Hunicke-Smith S."/>
            <person name="Hyman R.W."/>
            <person name="Komp C."/>
            <person name="Lashkari D."/>
            <person name="Lew H."/>
            <person name="Lin D."/>
            <person name="Mosedale D."/>
            <person name="Nakahara K."/>
            <person name="Namath A."/>
            <person name="Oefner P."/>
            <person name="Oh C."/>
            <person name="Petel F.X."/>
            <person name="Roberts D."/>
            <person name="Schramm S."/>
            <person name="Schroeder M."/>
            <person name="Shogren T."/>
            <person name="Shroff N."/>
            <person name="Winant A."/>
            <person name="Yelton M.A."/>
            <person name="Botstein D."/>
            <person name="Davis R.W."/>
            <person name="Johnston M."/>
            <person name="Andrews S."/>
            <person name="Brinkman R."/>
            <person name="Cooper J."/>
            <person name="Ding H."/>
            <person name="Du Z."/>
            <person name="Favello A."/>
            <person name="Fulton L."/>
            <person name="Gattung S."/>
            <person name="Greco T."/>
            <person name="Hallsworth K."/>
            <person name="Hawkins J."/>
            <person name="Hillier L.W."/>
            <person name="Jier M."/>
            <person name="Johnson D."/>
            <person name="Johnston L."/>
            <person name="Kirsten J."/>
            <person name="Kucaba T."/>
            <person name="Langston Y."/>
            <person name="Latreille P."/>
            <person name="Le T."/>
            <person name="Mardis E."/>
            <person name="Menezes S."/>
            <person name="Miller N."/>
            <person name="Nhan M."/>
            <person name="Pauley A."/>
            <person name="Peluso D."/>
            <person name="Rifkin L."/>
            <person name="Riles L."/>
            <person name="Taich A."/>
            <person name="Trevaskis E."/>
            <person name="Vignati D."/>
            <person name="Wilcox L."/>
            <person name="Wohldman P."/>
            <person name="Vaudin M."/>
            <person name="Wilson R."/>
            <person name="Waterston R."/>
            <person name="Albermann K."/>
            <person name="Hani J."/>
            <person name="Heumann K."/>
            <person name="Kleine K."/>
            <person name="Mewes H.-W."/>
            <person name="Zollner A."/>
            <person name="Zaccaria P."/>
        </authorList>
    </citation>
    <scope>NUCLEOTIDE SEQUENCE [LARGE SCALE GENOMIC DNA]</scope>
    <source>
        <strain>ATCC 204508 / S288c</strain>
    </source>
</reference>
<reference key="3">
    <citation type="journal article" date="2014" name="G3 (Bethesda)">
        <title>The reference genome sequence of Saccharomyces cerevisiae: Then and now.</title>
        <authorList>
            <person name="Engel S.R."/>
            <person name="Dietrich F.S."/>
            <person name="Fisk D.G."/>
            <person name="Binkley G."/>
            <person name="Balakrishnan R."/>
            <person name="Costanzo M.C."/>
            <person name="Dwight S.S."/>
            <person name="Hitz B.C."/>
            <person name="Karra K."/>
            <person name="Nash R.S."/>
            <person name="Weng S."/>
            <person name="Wong E.D."/>
            <person name="Lloyd P."/>
            <person name="Skrzypek M.S."/>
            <person name="Miyasato S.R."/>
            <person name="Simison M."/>
            <person name="Cherry J.M."/>
        </authorList>
    </citation>
    <scope>GENOME REANNOTATION</scope>
    <source>
        <strain>ATCC 204508 / S288c</strain>
    </source>
</reference>
<reference key="4">
    <citation type="journal article" date="1999" name="J. Biol. Chem.">
        <title>Purification and characterization of the yeast glycosylphosphatidylinositol-anchored, monobasic-specific aspartyl protease yapsin 2 (Mkc7p).</title>
        <authorList>
            <person name="Komano H."/>
            <person name="Rockwell N."/>
            <person name="Wang G.T."/>
            <person name="Krafft G.A."/>
            <person name="Fuller R.S."/>
        </authorList>
    </citation>
    <scope>PROTEIN SEQUENCE OF 269-275</scope>
    <scope>FUNCTION</scope>
    <scope>SUBCELLULAR LOCATION</scope>
    <scope>BIOPHYSICOCHEMICAL PROPERTIES</scope>
</reference>
<reference key="5">
    <citation type="journal article" date="2003" name="Nature">
        <title>Global analysis of protein expression in yeast.</title>
        <authorList>
            <person name="Ghaemmaghami S."/>
            <person name="Huh W.-K."/>
            <person name="Bower K."/>
            <person name="Howson R.W."/>
            <person name="Belle A."/>
            <person name="Dephoure N."/>
            <person name="O'Shea E.K."/>
            <person name="Weissman J.S."/>
        </authorList>
    </citation>
    <scope>LEVEL OF PROTEIN EXPRESSION [LARGE SCALE ANALYSIS]</scope>
</reference>
<reference key="6">
    <citation type="journal article" date="2005" name="Eukaryot. Cell">
        <title>Yapsins are a family of aspartyl proteases required for cell wall integrity in Saccharomyces cerevisiae.</title>
        <authorList>
            <person name="Krysan D.J."/>
            <person name="Ting E.L."/>
            <person name="Abeijon C."/>
            <person name="Kroos L."/>
            <person name="Fuller R.S."/>
        </authorList>
    </citation>
    <scope>FUNCTION</scope>
</reference>
<protein>
    <recommendedName>
        <fullName>Aspartic proteinase MKC7</fullName>
        <ecNumber>3.4.23.41</ecNumber>
    </recommendedName>
    <alternativeName>
        <fullName>Yapsin-2</fullName>
    </alternativeName>
</protein>
<gene>
    <name type="primary">MKC7</name>
    <name type="synonym">YPS2</name>
    <name type="ordered locus">YDR144C</name>
    <name type="ORF">YD2943.03C</name>
    <name type="ORF">YD8358.01C</name>
</gene>
<accession>P53379</accession>
<accession>D6VSC7</accession>